<protein>
    <recommendedName>
        <fullName>Uncharacterized protein YjeT</fullName>
    </recommendedName>
</protein>
<sequence length="65" mass="7166">MNSTIWLALALVLVLEGLGPMLYPKAWKKMISAMTNLPDNILRRFGGGLVVAGVVVYYMLRKTIG</sequence>
<accession>P0AF73</accession>
<accession>P39289</accession>
<accession>Q2M6C9</accession>
<keyword id="KW-1003">Cell membrane</keyword>
<keyword id="KW-0472">Membrane</keyword>
<keyword id="KW-1185">Reference proteome</keyword>
<keyword id="KW-0812">Transmembrane</keyword>
<keyword id="KW-1133">Transmembrane helix</keyword>
<reference key="1">
    <citation type="journal article" date="1995" name="Nucleic Acids Res.">
        <title>Analysis of the Escherichia coli genome VI: DNA sequence of the region from 92.8 through 100 minutes.</title>
        <authorList>
            <person name="Burland V.D."/>
            <person name="Plunkett G. III"/>
            <person name="Sofia H.J."/>
            <person name="Daniels D.L."/>
            <person name="Blattner F.R."/>
        </authorList>
    </citation>
    <scope>NUCLEOTIDE SEQUENCE [LARGE SCALE GENOMIC DNA]</scope>
    <source>
        <strain>K12 / MG1655 / ATCC 47076</strain>
    </source>
</reference>
<reference key="2">
    <citation type="journal article" date="1997" name="Science">
        <title>The complete genome sequence of Escherichia coli K-12.</title>
        <authorList>
            <person name="Blattner F.R."/>
            <person name="Plunkett G. III"/>
            <person name="Bloch C.A."/>
            <person name="Perna N.T."/>
            <person name="Burland V."/>
            <person name="Riley M."/>
            <person name="Collado-Vides J."/>
            <person name="Glasner J.D."/>
            <person name="Rode C.K."/>
            <person name="Mayhew G.F."/>
            <person name="Gregor J."/>
            <person name="Davis N.W."/>
            <person name="Kirkpatrick H.A."/>
            <person name="Goeden M.A."/>
            <person name="Rose D.J."/>
            <person name="Mau B."/>
            <person name="Shao Y."/>
        </authorList>
    </citation>
    <scope>NUCLEOTIDE SEQUENCE [LARGE SCALE GENOMIC DNA]</scope>
    <source>
        <strain>K12 / MG1655 / ATCC 47076</strain>
    </source>
</reference>
<reference key="3">
    <citation type="journal article" date="2006" name="Mol. Syst. Biol.">
        <title>Highly accurate genome sequences of Escherichia coli K-12 strains MG1655 and W3110.</title>
        <authorList>
            <person name="Hayashi K."/>
            <person name="Morooka N."/>
            <person name="Yamamoto Y."/>
            <person name="Fujita K."/>
            <person name="Isono K."/>
            <person name="Choi S."/>
            <person name="Ohtsubo E."/>
            <person name="Baba T."/>
            <person name="Wanner B.L."/>
            <person name="Mori H."/>
            <person name="Horiuchi T."/>
        </authorList>
    </citation>
    <scope>NUCLEOTIDE SEQUENCE [LARGE SCALE GENOMIC DNA]</scope>
    <source>
        <strain>K12 / W3110 / ATCC 27325 / DSM 5911</strain>
    </source>
</reference>
<evidence type="ECO:0000255" key="1"/>
<evidence type="ECO:0000305" key="2"/>
<proteinExistence type="predicted"/>
<name>YJET_ECOLI</name>
<dbReference type="EMBL" id="U14003">
    <property type="protein sequence ID" value="AAA97072.1"/>
    <property type="molecule type" value="Genomic_DNA"/>
</dbReference>
<dbReference type="EMBL" id="U00096">
    <property type="protein sequence ID" value="AAC77133.1"/>
    <property type="molecule type" value="Genomic_DNA"/>
</dbReference>
<dbReference type="EMBL" id="AP009048">
    <property type="protein sequence ID" value="BAE78177.1"/>
    <property type="molecule type" value="Genomic_DNA"/>
</dbReference>
<dbReference type="PIR" id="S56401">
    <property type="entry name" value="S56401"/>
</dbReference>
<dbReference type="RefSeq" id="NP_418597.1">
    <property type="nucleotide sequence ID" value="NC_000913.3"/>
</dbReference>
<dbReference type="RefSeq" id="WP_001089295.1">
    <property type="nucleotide sequence ID" value="NZ_STEB01000013.1"/>
</dbReference>
<dbReference type="BioGRID" id="4262697">
    <property type="interactions" value="10"/>
</dbReference>
<dbReference type="FunCoup" id="P0AF73">
    <property type="interactions" value="31"/>
</dbReference>
<dbReference type="IntAct" id="P0AF73">
    <property type="interactions" value="1"/>
</dbReference>
<dbReference type="STRING" id="511145.b4176"/>
<dbReference type="PaxDb" id="511145-b4176"/>
<dbReference type="EnsemblBacteria" id="AAC77133">
    <property type="protein sequence ID" value="AAC77133"/>
    <property type="gene ID" value="b4176"/>
</dbReference>
<dbReference type="GeneID" id="948696"/>
<dbReference type="KEGG" id="ecj:JW4134"/>
<dbReference type="KEGG" id="eco:b4176"/>
<dbReference type="KEGG" id="ecoc:C3026_22565"/>
<dbReference type="PATRIC" id="fig|511145.12.peg.4307"/>
<dbReference type="EchoBASE" id="EB2375"/>
<dbReference type="eggNOG" id="COG3242">
    <property type="taxonomic scope" value="Bacteria"/>
</dbReference>
<dbReference type="HOGENOM" id="CLU_179416_0_0_6"/>
<dbReference type="InParanoid" id="P0AF73"/>
<dbReference type="OMA" id="NRWRAYL"/>
<dbReference type="PhylomeDB" id="P0AF73"/>
<dbReference type="BioCyc" id="EcoCyc:G7844-MONOMER"/>
<dbReference type="PRO" id="PR:P0AF73"/>
<dbReference type="Proteomes" id="UP000000625">
    <property type="component" value="Chromosome"/>
</dbReference>
<dbReference type="GO" id="GO:0005886">
    <property type="term" value="C:plasma membrane"/>
    <property type="evidence" value="ECO:0007669"/>
    <property type="project" value="UniProtKB-SubCell"/>
</dbReference>
<dbReference type="InterPro" id="IPR019201">
    <property type="entry name" value="DUF2065"/>
</dbReference>
<dbReference type="PANTHER" id="PTHR38602:SF1">
    <property type="entry name" value="INNER MEMBRANE PROTEIN"/>
    <property type="match status" value="1"/>
</dbReference>
<dbReference type="PANTHER" id="PTHR38602">
    <property type="entry name" value="INNER MEMBRANE PROTEIN-RELATED"/>
    <property type="match status" value="1"/>
</dbReference>
<dbReference type="Pfam" id="PF09838">
    <property type="entry name" value="DUF2065"/>
    <property type="match status" value="1"/>
</dbReference>
<feature type="chain" id="PRO_0000169743" description="Uncharacterized protein YjeT">
    <location>
        <begin position="1"/>
        <end position="65"/>
    </location>
</feature>
<feature type="transmembrane region" description="Helical" evidence="1">
    <location>
        <begin position="4"/>
        <end position="24"/>
    </location>
</feature>
<feature type="transmembrane region" description="Helical" evidence="1">
    <location>
        <begin position="45"/>
        <end position="65"/>
    </location>
</feature>
<organism>
    <name type="scientific">Escherichia coli (strain K12)</name>
    <dbReference type="NCBI Taxonomy" id="83333"/>
    <lineage>
        <taxon>Bacteria</taxon>
        <taxon>Pseudomonadati</taxon>
        <taxon>Pseudomonadota</taxon>
        <taxon>Gammaproteobacteria</taxon>
        <taxon>Enterobacterales</taxon>
        <taxon>Enterobacteriaceae</taxon>
        <taxon>Escherichia</taxon>
    </lineage>
</organism>
<gene>
    <name type="primary">yjeT</name>
    <name type="ordered locus">b4176</name>
    <name type="ordered locus">JW4134</name>
</gene>
<comment type="subcellular location">
    <subcellularLocation>
        <location evidence="2">Cell membrane</location>
        <topology evidence="2">Multi-pass membrane protein</topology>
    </subcellularLocation>
</comment>